<evidence type="ECO:0000255" key="1">
    <source>
        <dbReference type="PROSITE-ProRule" id="PRU00981"/>
    </source>
</evidence>
<evidence type="ECO:0000256" key="2">
    <source>
        <dbReference type="SAM" id="MobiDB-lite"/>
    </source>
</evidence>
<evidence type="ECO:0000269" key="3">
    <source>
    </source>
</evidence>
<evidence type="ECO:0000303" key="4">
    <source>
    </source>
</evidence>
<evidence type="ECO:0000303" key="5">
    <source>
    </source>
</evidence>
<evidence type="ECO:0000305" key="6"/>
<evidence type="ECO:0000312" key="7">
    <source>
        <dbReference type="EMBL" id="AAV67820.1"/>
    </source>
</evidence>
<evidence type="ECO:0000312" key="8">
    <source>
        <dbReference type="EMBL" id="BAS95124.1"/>
    </source>
</evidence>
<reference key="1">
    <citation type="journal article" date="2005" name="Mol. Genet. Genomics">
        <title>A fine physical map of the rice chromosome 5.</title>
        <authorList>
            <person name="Cheng C.-H."/>
            <person name="Chung M.C."/>
            <person name="Liu S.-M."/>
            <person name="Chen S.-K."/>
            <person name="Kao F.Y."/>
            <person name="Lin S.-J."/>
            <person name="Hsiao S.-H."/>
            <person name="Tseng I.C."/>
            <person name="Hsing Y.-I.C."/>
            <person name="Wu H.-P."/>
            <person name="Chen C.-S."/>
            <person name="Shaw J.-F."/>
            <person name="Wu J."/>
            <person name="Matsumoto T."/>
            <person name="Sasaki T."/>
            <person name="Chen H.-C."/>
            <person name="Chow T.-Y."/>
        </authorList>
    </citation>
    <scope>NUCLEOTIDE SEQUENCE [LARGE SCALE GENOMIC DNA]</scope>
    <source>
        <strain>cv. Nipponbare</strain>
    </source>
</reference>
<reference key="2">
    <citation type="journal article" date="2005" name="Nature">
        <title>The map-based sequence of the rice genome.</title>
        <authorList>
            <consortium name="International rice genome sequencing project (IRGSP)"/>
        </authorList>
    </citation>
    <scope>NUCLEOTIDE SEQUENCE [LARGE SCALE GENOMIC DNA]</scope>
    <source>
        <strain>cv. Nipponbare</strain>
    </source>
</reference>
<reference key="3">
    <citation type="journal article" date="2008" name="Nucleic Acids Res.">
        <title>The rice annotation project database (RAP-DB): 2008 update.</title>
        <authorList>
            <consortium name="The rice annotation project (RAP)"/>
        </authorList>
    </citation>
    <scope>GENOME REANNOTATION</scope>
    <source>
        <strain>cv. Nipponbare</strain>
    </source>
</reference>
<reference key="4">
    <citation type="journal article" date="2013" name="Rice">
        <title>Improvement of the Oryza sativa Nipponbare reference genome using next generation sequence and optical map data.</title>
        <authorList>
            <person name="Kawahara Y."/>
            <person name="de la Bastide M."/>
            <person name="Hamilton J.P."/>
            <person name="Kanamori H."/>
            <person name="McCombie W.R."/>
            <person name="Ouyang S."/>
            <person name="Schwartz D.C."/>
            <person name="Tanaka T."/>
            <person name="Wu J."/>
            <person name="Zhou S."/>
            <person name="Childs K.L."/>
            <person name="Davidson R.M."/>
            <person name="Lin H."/>
            <person name="Quesada-Ocampo L."/>
            <person name="Vaillancourt B."/>
            <person name="Sakai H."/>
            <person name="Lee S.S."/>
            <person name="Kim J."/>
            <person name="Numa H."/>
            <person name="Itoh T."/>
            <person name="Buell C.R."/>
            <person name="Matsumoto T."/>
        </authorList>
    </citation>
    <scope>GENOME REANNOTATION</scope>
    <source>
        <strain>cv. Nipponbare</strain>
    </source>
</reference>
<reference key="5">
    <citation type="journal article" date="2006" name="Plant Physiol.">
        <title>Genome-wide analysis of basic/helix-loop-helix transcription factor family in rice and Arabidopsis.</title>
        <authorList>
            <person name="Li X."/>
            <person name="Duan X."/>
            <person name="Jiang H."/>
            <person name="Sun Y."/>
            <person name="Tang Y."/>
            <person name="Yuan Z."/>
            <person name="Guo J."/>
            <person name="Liang W."/>
            <person name="Chen L."/>
            <person name="Yin J."/>
            <person name="Ma H."/>
            <person name="Wang J."/>
            <person name="Zhang D."/>
        </authorList>
    </citation>
    <scope>GENE FAMILY</scope>
    <scope>NOMENCLATURE</scope>
</reference>
<reference key="6">
    <citation type="journal article" date="2011" name="New Biotechnol.">
        <title>An atypical HLH protein OsLF in rice regulates flowering time and interacts with OsPIL13 and OsPIL15.</title>
        <authorList>
            <person name="Zhao X.L."/>
            <person name="Shi Z.Y."/>
            <person name="Peng L.T."/>
            <person name="Shen G.Z."/>
            <person name="Zhang J.L."/>
        </authorList>
    </citation>
    <scope>FUNCTION</scope>
    <scope>INTERACTION WITH PIL13 AND PIL15</scope>
    <scope>SUBCELLULAR LOCATION</scope>
    <source>
        <strain>cv. Zhonghua 11</strain>
    </source>
</reference>
<proteinExistence type="evidence at protein level"/>
<accession>A0A0P0WQ90</accession>
<accession>C7J2H7</accession>
<accession>Q5TKP7</accession>
<dbReference type="EMBL" id="AC104713">
    <property type="protein sequence ID" value="AAV67820.1"/>
    <property type="molecule type" value="Genomic_DNA"/>
</dbReference>
<dbReference type="EMBL" id="AP008211">
    <property type="protein sequence ID" value="BAH93234.1"/>
    <property type="status" value="ALT_INIT"/>
    <property type="molecule type" value="Genomic_DNA"/>
</dbReference>
<dbReference type="EMBL" id="AP014961">
    <property type="protein sequence ID" value="BAS95124.1"/>
    <property type="molecule type" value="Genomic_DNA"/>
</dbReference>
<dbReference type="RefSeq" id="XP_015638480.1">
    <property type="nucleotide sequence ID" value="XM_015782994.1"/>
</dbReference>
<dbReference type="SMR" id="A0A0P0WQ90"/>
<dbReference type="FunCoup" id="A0A0P0WQ90">
    <property type="interactions" value="764"/>
</dbReference>
<dbReference type="STRING" id="39947.A0A0P0WQ90"/>
<dbReference type="PaxDb" id="39947-A0A0P0WQ90"/>
<dbReference type="EnsemblPlants" id="Os05t0541400-01">
    <property type="protein sequence ID" value="Os05t0541400-01"/>
    <property type="gene ID" value="Os05g0541400"/>
</dbReference>
<dbReference type="GeneID" id="9269440"/>
<dbReference type="Gramene" id="Os05t0541400-01">
    <property type="protein sequence ID" value="Os05t0541400-01"/>
    <property type="gene ID" value="Os05g0541400"/>
</dbReference>
<dbReference type="KEGG" id="dosa:Os05g0541400"/>
<dbReference type="KEGG" id="osa:9269440"/>
<dbReference type="eggNOG" id="ENOG502QR69">
    <property type="taxonomic scope" value="Eukaryota"/>
</dbReference>
<dbReference type="HOGENOM" id="CLU_053770_0_0_1"/>
<dbReference type="InParanoid" id="A0A0P0WQ90"/>
<dbReference type="OMA" id="DRFAFPN"/>
<dbReference type="OrthoDB" id="2017571at2759"/>
<dbReference type="Proteomes" id="UP000000763">
    <property type="component" value="Chromosome 5"/>
</dbReference>
<dbReference type="Proteomes" id="UP000059680">
    <property type="component" value="Chromosome 5"/>
</dbReference>
<dbReference type="GO" id="GO:0005634">
    <property type="term" value="C:nucleus"/>
    <property type="evidence" value="ECO:0000314"/>
    <property type="project" value="UniProtKB"/>
</dbReference>
<dbReference type="GO" id="GO:0003700">
    <property type="term" value="F:DNA-binding transcription factor activity"/>
    <property type="evidence" value="ECO:0007669"/>
    <property type="project" value="InterPro"/>
</dbReference>
<dbReference type="GO" id="GO:0046983">
    <property type="term" value="F:protein dimerization activity"/>
    <property type="evidence" value="ECO:0007669"/>
    <property type="project" value="InterPro"/>
</dbReference>
<dbReference type="GO" id="GO:0006355">
    <property type="term" value="P:regulation of DNA-templated transcription"/>
    <property type="evidence" value="ECO:0000314"/>
    <property type="project" value="UniProtKB"/>
</dbReference>
<dbReference type="GO" id="GO:0048586">
    <property type="term" value="P:regulation of long-day photoperiodism, flowering"/>
    <property type="evidence" value="ECO:0000315"/>
    <property type="project" value="UniProtKB"/>
</dbReference>
<dbReference type="GO" id="GO:0048587">
    <property type="term" value="P:regulation of short-day photoperiodism, flowering"/>
    <property type="evidence" value="ECO:0000315"/>
    <property type="project" value="UniProtKB"/>
</dbReference>
<dbReference type="CDD" id="cd11454">
    <property type="entry name" value="bHLH_AtIND_like"/>
    <property type="match status" value="1"/>
</dbReference>
<dbReference type="FunFam" id="4.10.280.10:FF:000089">
    <property type="entry name" value="Transcription factor LAX PANICLE"/>
    <property type="match status" value="1"/>
</dbReference>
<dbReference type="Gene3D" id="4.10.280.10">
    <property type="entry name" value="Helix-loop-helix DNA-binding domain"/>
    <property type="match status" value="1"/>
</dbReference>
<dbReference type="InterPro" id="IPR011598">
    <property type="entry name" value="bHLH_dom"/>
</dbReference>
<dbReference type="InterPro" id="IPR036638">
    <property type="entry name" value="HLH_DNA-bd_sf"/>
</dbReference>
<dbReference type="InterPro" id="IPR045843">
    <property type="entry name" value="IND-like"/>
</dbReference>
<dbReference type="PANTHER" id="PTHR45914">
    <property type="entry name" value="TRANSCRIPTION FACTOR HEC3-RELATED"/>
    <property type="match status" value="1"/>
</dbReference>
<dbReference type="PANTHER" id="PTHR45914:SF40">
    <property type="entry name" value="TRANSCRIPTION FACTOR LATE FLOWERING"/>
    <property type="match status" value="1"/>
</dbReference>
<dbReference type="Pfam" id="PF00010">
    <property type="entry name" value="HLH"/>
    <property type="match status" value="1"/>
</dbReference>
<dbReference type="SMART" id="SM00353">
    <property type="entry name" value="HLH"/>
    <property type="match status" value="1"/>
</dbReference>
<dbReference type="SUPFAM" id="SSF47459">
    <property type="entry name" value="HLH, helix-loop-helix DNA-binding domain"/>
    <property type="match status" value="1"/>
</dbReference>
<dbReference type="PROSITE" id="PS50888">
    <property type="entry name" value="BHLH"/>
    <property type="match status" value="1"/>
</dbReference>
<comment type="function">
    <text evidence="3">Transcription factor involved in the negative regulation of flowering. May be involved in the repression of the flowering factor GI and HD1 by interacting with PIL13 and PIL15 and competing with PRR1. Possesses transactivation activity in yeast.</text>
</comment>
<comment type="subunit">
    <text evidence="3">Interacts with PIL13 and PIL15.</text>
</comment>
<comment type="subcellular location">
    <subcellularLocation>
        <location evidence="1 3">Nucleus</location>
    </subcellularLocation>
</comment>
<comment type="miscellaneous">
    <text evidence="3">The gain-of-function mutant A654 (T-DNA tagging) exhibit late flowering phenotype under short day (SD) and long day (LD) conditions.</text>
</comment>
<comment type="similarity">
    <text evidence="6">Belongs to the bHLH protein family.</text>
</comment>
<comment type="caution">
    <text evidence="1">Contains a degenerate basic motif not likely to bind DNA.</text>
</comment>
<comment type="sequence caution" evidence="6">
    <conflict type="erroneous initiation">
        <sequence resource="EMBL-CDS" id="BAH93234"/>
    </conflict>
    <text>Truncated N-terminus.</text>
</comment>
<keyword id="KW-0010">Activator</keyword>
<keyword id="KW-0539">Nucleus</keyword>
<keyword id="KW-1185">Reference proteome</keyword>
<keyword id="KW-0804">Transcription</keyword>
<keyword id="KW-0805">Transcription regulation</keyword>
<gene>
    <name evidence="5" type="primary">LF</name>
    <name evidence="4" type="synonym">BHLH119</name>
    <name evidence="8" type="ordered locus">Os05g0541400</name>
    <name evidence="6" type="ordered locus">LOC_Os05g46370</name>
    <name evidence="7" type="ORF">OJ1362_G11.11</name>
</gene>
<name>LF_ORYSJ</name>
<protein>
    <recommendedName>
        <fullName evidence="5">Transcription factor LATE FLOWERING</fullName>
        <shortName evidence="5">OsLF</shortName>
    </recommendedName>
    <alternativeName>
        <fullName evidence="4">Basic helix-loop-helix protein 119</fullName>
        <shortName evidence="4">OsbHLH119</shortName>
    </alternativeName>
</protein>
<sequence length="416" mass="42671">MYMDAFGWSAPAAPCQPSCGPGGDDDDDVLLAAVLGASFELHSLVDGGGNGAAGAVRSDDAYGLDVDLPSHQMSLLRCQDGLSALHGDASPTAAAAAFLDSVDVLPVPAIAGATHDDGGLLDRFAFPNVAETTTVQAAASNTAFSGYSSNTTGGGNISSGESNTYTEVASTPCAVSTTTTTTALPPSKRKLPEKYPVVGTSPTTKTTTTSETAAERRSTKRGAGGSSSITFGGGCHGAGAAAALLGYGRGYEPDTEAIAQVKEMIYRAAAMRPVTLGGPASASDPSSRPPPPPQRPRRKNVRISSDPQTVAARLRRERVSERLRVLQRLVPGGSKMDTATMLDEAASYLKFLKSQLEALETLGNGNGNGNLLHHGYYTGSRNATATAATGSSNSTVLAFGRDGLAGFVKSNRNLQL</sequence>
<organism>
    <name type="scientific">Oryza sativa subsp. japonica</name>
    <name type="common">Rice</name>
    <dbReference type="NCBI Taxonomy" id="39947"/>
    <lineage>
        <taxon>Eukaryota</taxon>
        <taxon>Viridiplantae</taxon>
        <taxon>Streptophyta</taxon>
        <taxon>Embryophyta</taxon>
        <taxon>Tracheophyta</taxon>
        <taxon>Spermatophyta</taxon>
        <taxon>Magnoliopsida</taxon>
        <taxon>Liliopsida</taxon>
        <taxon>Poales</taxon>
        <taxon>Poaceae</taxon>
        <taxon>BOP clade</taxon>
        <taxon>Oryzoideae</taxon>
        <taxon>Oryzeae</taxon>
        <taxon>Oryzinae</taxon>
        <taxon>Oryza</taxon>
        <taxon>Oryza sativa</taxon>
    </lineage>
</organism>
<feature type="chain" id="PRO_0000444468" description="Transcription factor LATE FLOWERING">
    <location>
        <begin position="1"/>
        <end position="416"/>
    </location>
</feature>
<feature type="domain" description="bHLH" evidence="1">
    <location>
        <begin position="303"/>
        <end position="352"/>
    </location>
</feature>
<feature type="region of interest" description="Disordered" evidence="2">
    <location>
        <begin position="176"/>
        <end position="226"/>
    </location>
</feature>
<feature type="region of interest" description="Disordered" evidence="2">
    <location>
        <begin position="276"/>
        <end position="311"/>
    </location>
</feature>
<feature type="region of interest" description="Basic motif; degenerate" evidence="1">
    <location>
        <begin position="303"/>
        <end position="316"/>
    </location>
</feature>
<feature type="region of interest" description="Helix-loop-helix motif" evidence="1">
    <location>
        <begin position="317"/>
        <end position="352"/>
    </location>
</feature>
<feature type="compositionally biased region" description="Low complexity" evidence="2">
    <location>
        <begin position="176"/>
        <end position="186"/>
    </location>
</feature>
<feature type="compositionally biased region" description="Low complexity" evidence="2">
    <location>
        <begin position="200"/>
        <end position="212"/>
    </location>
</feature>
<feature type="sequence conflict" description="In Ref. 2; BAH93234 and 1; AAV67820." evidence="6" ref="2 1">
    <original>I</original>
    <variation>V</variation>
    <location>
        <position position="265"/>
    </location>
</feature>
<feature type="sequence conflict" description="In Ref. 2; BAH93234 and 1; AAV67820." evidence="6" ref="2 1">
    <original>A</original>
    <variation>P</variation>
    <location>
        <position position="270"/>
    </location>
</feature>